<proteinExistence type="inferred from homology"/>
<reference key="1">
    <citation type="journal article" date="2008" name="J. Bacteriol.">
        <title>The complete genome sequence of Actinobacillus pleuropneumoniae L20 (serotype 5b).</title>
        <authorList>
            <person name="Foote S.J."/>
            <person name="Bosse J.T."/>
            <person name="Bouevitch A.B."/>
            <person name="Langford P.R."/>
            <person name="Young N.M."/>
            <person name="Nash J.H.E."/>
        </authorList>
    </citation>
    <scope>NUCLEOTIDE SEQUENCE [LARGE SCALE GENOMIC DNA]</scope>
    <source>
        <strain>L20</strain>
    </source>
</reference>
<keyword id="KW-0028">Amino-acid biosynthesis</keyword>
<keyword id="KW-0067">ATP-binding</keyword>
<keyword id="KW-0963">Cytoplasm</keyword>
<keyword id="KW-0328">Glycosyltransferase</keyword>
<keyword id="KW-0368">Histidine biosynthesis</keyword>
<keyword id="KW-0460">Magnesium</keyword>
<keyword id="KW-0479">Metal-binding</keyword>
<keyword id="KW-0547">Nucleotide-binding</keyword>
<keyword id="KW-1185">Reference proteome</keyword>
<keyword id="KW-0808">Transferase</keyword>
<dbReference type="EC" id="2.4.2.17" evidence="1"/>
<dbReference type="EMBL" id="CP000569">
    <property type="protein sequence ID" value="ABN75093.1"/>
    <property type="molecule type" value="Genomic_DNA"/>
</dbReference>
<dbReference type="RefSeq" id="WP_005606152.1">
    <property type="nucleotide sequence ID" value="NC_009053.1"/>
</dbReference>
<dbReference type="SMR" id="A3N3V7"/>
<dbReference type="STRING" id="416269.APL_2019"/>
<dbReference type="EnsemblBacteria" id="ABN75093">
    <property type="protein sequence ID" value="ABN75093"/>
    <property type="gene ID" value="APL_2019"/>
</dbReference>
<dbReference type="KEGG" id="apl:APL_2019"/>
<dbReference type="eggNOG" id="COG0040">
    <property type="taxonomic scope" value="Bacteria"/>
</dbReference>
<dbReference type="HOGENOM" id="CLU_038115_1_0_6"/>
<dbReference type="UniPathway" id="UPA00031">
    <property type="reaction ID" value="UER00006"/>
</dbReference>
<dbReference type="Proteomes" id="UP000001432">
    <property type="component" value="Chromosome"/>
</dbReference>
<dbReference type="GO" id="GO:0005737">
    <property type="term" value="C:cytoplasm"/>
    <property type="evidence" value="ECO:0007669"/>
    <property type="project" value="UniProtKB-SubCell"/>
</dbReference>
<dbReference type="GO" id="GO:0005524">
    <property type="term" value="F:ATP binding"/>
    <property type="evidence" value="ECO:0007669"/>
    <property type="project" value="UniProtKB-KW"/>
</dbReference>
<dbReference type="GO" id="GO:0003879">
    <property type="term" value="F:ATP phosphoribosyltransferase activity"/>
    <property type="evidence" value="ECO:0007669"/>
    <property type="project" value="UniProtKB-UniRule"/>
</dbReference>
<dbReference type="GO" id="GO:0000287">
    <property type="term" value="F:magnesium ion binding"/>
    <property type="evidence" value="ECO:0007669"/>
    <property type="project" value="UniProtKB-UniRule"/>
</dbReference>
<dbReference type="GO" id="GO:0000105">
    <property type="term" value="P:L-histidine biosynthetic process"/>
    <property type="evidence" value="ECO:0007669"/>
    <property type="project" value="UniProtKB-UniRule"/>
</dbReference>
<dbReference type="CDD" id="cd13592">
    <property type="entry name" value="PBP2_HisGL2"/>
    <property type="match status" value="1"/>
</dbReference>
<dbReference type="FunFam" id="3.30.70.120:FF:000002">
    <property type="entry name" value="ATP phosphoribosyltransferase"/>
    <property type="match status" value="1"/>
</dbReference>
<dbReference type="FunFam" id="3.40.190.10:FF:000008">
    <property type="entry name" value="ATP phosphoribosyltransferase"/>
    <property type="match status" value="1"/>
</dbReference>
<dbReference type="Gene3D" id="3.30.70.120">
    <property type="match status" value="1"/>
</dbReference>
<dbReference type="Gene3D" id="3.40.190.10">
    <property type="entry name" value="Periplasmic binding protein-like II"/>
    <property type="match status" value="2"/>
</dbReference>
<dbReference type="HAMAP" id="MF_00079">
    <property type="entry name" value="HisG_Long"/>
    <property type="match status" value="1"/>
</dbReference>
<dbReference type="InterPro" id="IPR020621">
    <property type="entry name" value="ATP-PRT_HisG_long"/>
</dbReference>
<dbReference type="InterPro" id="IPR013820">
    <property type="entry name" value="ATP_PRibTrfase_cat"/>
</dbReference>
<dbReference type="InterPro" id="IPR018198">
    <property type="entry name" value="ATP_PRibTrfase_CS"/>
</dbReference>
<dbReference type="InterPro" id="IPR001348">
    <property type="entry name" value="ATP_PRibTrfase_HisG"/>
</dbReference>
<dbReference type="InterPro" id="IPR013115">
    <property type="entry name" value="HisG_C"/>
</dbReference>
<dbReference type="InterPro" id="IPR011322">
    <property type="entry name" value="N-reg_PII-like_a/b"/>
</dbReference>
<dbReference type="InterPro" id="IPR015867">
    <property type="entry name" value="N-reg_PII/ATP_PRibTrfase_C"/>
</dbReference>
<dbReference type="NCBIfam" id="TIGR00070">
    <property type="entry name" value="hisG"/>
    <property type="match status" value="1"/>
</dbReference>
<dbReference type="NCBIfam" id="TIGR03455">
    <property type="entry name" value="HisG_C-term"/>
    <property type="match status" value="1"/>
</dbReference>
<dbReference type="PANTHER" id="PTHR21403:SF8">
    <property type="entry name" value="ATP PHOSPHORIBOSYLTRANSFERASE"/>
    <property type="match status" value="1"/>
</dbReference>
<dbReference type="PANTHER" id="PTHR21403">
    <property type="entry name" value="ATP PHOSPHORIBOSYLTRANSFERASE ATP-PRTASE"/>
    <property type="match status" value="1"/>
</dbReference>
<dbReference type="Pfam" id="PF01634">
    <property type="entry name" value="HisG"/>
    <property type="match status" value="1"/>
</dbReference>
<dbReference type="Pfam" id="PF08029">
    <property type="entry name" value="HisG_C"/>
    <property type="match status" value="1"/>
</dbReference>
<dbReference type="SUPFAM" id="SSF54913">
    <property type="entry name" value="GlnB-like"/>
    <property type="match status" value="1"/>
</dbReference>
<dbReference type="SUPFAM" id="SSF53850">
    <property type="entry name" value="Periplasmic binding protein-like II"/>
    <property type="match status" value="1"/>
</dbReference>
<dbReference type="PROSITE" id="PS01316">
    <property type="entry name" value="ATP_P_PHORIBOSYLTR"/>
    <property type="match status" value="1"/>
</dbReference>
<name>HIS1_ACTP2</name>
<organism>
    <name type="scientific">Actinobacillus pleuropneumoniae serotype 5b (strain L20)</name>
    <dbReference type="NCBI Taxonomy" id="416269"/>
    <lineage>
        <taxon>Bacteria</taxon>
        <taxon>Pseudomonadati</taxon>
        <taxon>Pseudomonadota</taxon>
        <taxon>Gammaproteobacteria</taxon>
        <taxon>Pasteurellales</taxon>
        <taxon>Pasteurellaceae</taxon>
        <taxon>Actinobacillus</taxon>
    </lineage>
</organism>
<comment type="function">
    <text evidence="1">Catalyzes the condensation of ATP and 5-phosphoribose 1-diphosphate to form N'-(5'-phosphoribosyl)-ATP (PR-ATP). Has a crucial role in the pathway because the rate of histidine biosynthesis seems to be controlled primarily by regulation of HisG enzymatic activity.</text>
</comment>
<comment type="catalytic activity">
    <reaction evidence="1">
        <text>1-(5-phospho-beta-D-ribosyl)-ATP + diphosphate = 5-phospho-alpha-D-ribose 1-diphosphate + ATP</text>
        <dbReference type="Rhea" id="RHEA:18473"/>
        <dbReference type="ChEBI" id="CHEBI:30616"/>
        <dbReference type="ChEBI" id="CHEBI:33019"/>
        <dbReference type="ChEBI" id="CHEBI:58017"/>
        <dbReference type="ChEBI" id="CHEBI:73183"/>
        <dbReference type="EC" id="2.4.2.17"/>
    </reaction>
</comment>
<comment type="cofactor">
    <cofactor evidence="1">
        <name>Mg(2+)</name>
        <dbReference type="ChEBI" id="CHEBI:18420"/>
    </cofactor>
</comment>
<comment type="activity regulation">
    <text evidence="1">Feedback inhibited by histidine.</text>
</comment>
<comment type="pathway">
    <text evidence="1">Amino-acid biosynthesis; L-histidine biosynthesis; L-histidine from 5-phospho-alpha-D-ribose 1-diphosphate: step 1/9.</text>
</comment>
<comment type="subcellular location">
    <subcellularLocation>
        <location evidence="1">Cytoplasm</location>
    </subcellularLocation>
</comment>
<comment type="similarity">
    <text evidence="1">Belongs to the ATP phosphoribosyltransferase family. Long subfamily.</text>
</comment>
<accession>A3N3V7</accession>
<protein>
    <recommendedName>
        <fullName evidence="1">ATP phosphoribosyltransferase</fullName>
        <shortName evidence="1">ATP-PRT</shortName>
        <shortName evidence="1">ATP-PRTase</shortName>
        <ecNumber evidence="1">2.4.2.17</ecNumber>
    </recommendedName>
</protein>
<sequence>MTTTNRLRIALQKKGRLSKDCNELLKQCGVKINWNEQRLIAYAENMPIEILRVRDDDIPGLVFEGVVDLGIIGENVLEEEELGRLARGEKIEYKKLRTLDFGGCRLSLAIDRDRTYNGVQDFVNSRIATSYPNLLKRYMNEKGVAFKSTLLNGSVEVAPSAGLADAICDLVSSGATLEANGLKEVEVIYQSKACLIQRAEPLSTEKQALVDRLLTRIQGVQQAAESKYIMLHAPKDKLKEITALLPGVENPTILPLANDSARVAMHVVSQENLFWETMEQLKEMGASSVLVLPIEKMLA</sequence>
<evidence type="ECO:0000255" key="1">
    <source>
        <dbReference type="HAMAP-Rule" id="MF_00079"/>
    </source>
</evidence>
<gene>
    <name evidence="1" type="primary">hisG</name>
    <name type="ordered locus">APL_2019</name>
</gene>
<feature type="chain" id="PRO_1000004437" description="ATP phosphoribosyltransferase">
    <location>
        <begin position="1"/>
        <end position="299"/>
    </location>
</feature>